<organism>
    <name type="scientific">Serratia proteamaculans (strain 568)</name>
    <dbReference type="NCBI Taxonomy" id="399741"/>
    <lineage>
        <taxon>Bacteria</taxon>
        <taxon>Pseudomonadati</taxon>
        <taxon>Pseudomonadota</taxon>
        <taxon>Gammaproteobacteria</taxon>
        <taxon>Enterobacterales</taxon>
        <taxon>Yersiniaceae</taxon>
        <taxon>Serratia</taxon>
    </lineage>
</organism>
<name>SDHD_SERP5</name>
<evidence type="ECO:0000255" key="1">
    <source>
        <dbReference type="HAMAP-Rule" id="MF_01030"/>
    </source>
</evidence>
<feature type="chain" id="PRO_1000063716" description="D-serine dehydratase">
    <location>
        <begin position="1"/>
        <end position="445"/>
    </location>
</feature>
<feature type="modified residue" description="N6-(pyridoxal phosphate)lysine" evidence="1">
    <location>
        <position position="118"/>
    </location>
</feature>
<keyword id="KW-0456">Lyase</keyword>
<keyword id="KW-0663">Pyridoxal phosphate</keyword>
<comment type="catalytic activity">
    <reaction evidence="1">
        <text>D-serine = pyruvate + NH4(+)</text>
        <dbReference type="Rhea" id="RHEA:13977"/>
        <dbReference type="ChEBI" id="CHEBI:15361"/>
        <dbReference type="ChEBI" id="CHEBI:28938"/>
        <dbReference type="ChEBI" id="CHEBI:35247"/>
        <dbReference type="EC" id="4.3.1.18"/>
    </reaction>
</comment>
<comment type="cofactor">
    <cofactor evidence="1">
        <name>pyridoxal 5'-phosphate</name>
        <dbReference type="ChEBI" id="CHEBI:597326"/>
    </cofactor>
</comment>
<comment type="subunit">
    <text evidence="1">Monomer.</text>
</comment>
<comment type="similarity">
    <text evidence="1">Belongs to the serine/threonine dehydratase family. DsdA subfamily.</text>
</comment>
<dbReference type="EC" id="4.3.1.18" evidence="1"/>
<dbReference type="EMBL" id="CP000826">
    <property type="protein sequence ID" value="ABV41616.1"/>
    <property type="molecule type" value="Genomic_DNA"/>
</dbReference>
<dbReference type="SMR" id="A8GES6"/>
<dbReference type="STRING" id="399741.Spro_2515"/>
<dbReference type="KEGG" id="spe:Spro_2515"/>
<dbReference type="eggNOG" id="COG3048">
    <property type="taxonomic scope" value="Bacteria"/>
</dbReference>
<dbReference type="HOGENOM" id="CLU_035707_0_0_6"/>
<dbReference type="OrthoDB" id="9780546at2"/>
<dbReference type="GO" id="GO:0008721">
    <property type="term" value="F:D-serine ammonia-lyase activity"/>
    <property type="evidence" value="ECO:0007669"/>
    <property type="project" value="UniProtKB-EC"/>
</dbReference>
<dbReference type="GO" id="GO:0016836">
    <property type="term" value="F:hydro-lyase activity"/>
    <property type="evidence" value="ECO:0007669"/>
    <property type="project" value="UniProtKB-UniRule"/>
</dbReference>
<dbReference type="GO" id="GO:0030170">
    <property type="term" value="F:pyridoxal phosphate binding"/>
    <property type="evidence" value="ECO:0007669"/>
    <property type="project" value="InterPro"/>
</dbReference>
<dbReference type="GO" id="GO:0036088">
    <property type="term" value="P:D-serine catabolic process"/>
    <property type="evidence" value="ECO:0007669"/>
    <property type="project" value="TreeGrafter"/>
</dbReference>
<dbReference type="GO" id="GO:0009097">
    <property type="term" value="P:isoleucine biosynthetic process"/>
    <property type="evidence" value="ECO:0007669"/>
    <property type="project" value="TreeGrafter"/>
</dbReference>
<dbReference type="FunFam" id="3.40.50.1100:FF:000018">
    <property type="entry name" value="D-serine dehydratase"/>
    <property type="match status" value="1"/>
</dbReference>
<dbReference type="Gene3D" id="3.40.50.1100">
    <property type="match status" value="2"/>
</dbReference>
<dbReference type="HAMAP" id="MF_01030">
    <property type="entry name" value="D_Ser_dehydrat"/>
    <property type="match status" value="1"/>
</dbReference>
<dbReference type="InterPro" id="IPR011780">
    <property type="entry name" value="D_Ser_am_lyase"/>
</dbReference>
<dbReference type="InterPro" id="IPR050147">
    <property type="entry name" value="Ser/Thr_Dehydratase"/>
</dbReference>
<dbReference type="InterPro" id="IPR000634">
    <property type="entry name" value="Ser/Thr_deHydtase_PyrdxlP-BS"/>
</dbReference>
<dbReference type="InterPro" id="IPR001926">
    <property type="entry name" value="TrpB-like_PALP"/>
</dbReference>
<dbReference type="InterPro" id="IPR036052">
    <property type="entry name" value="TrpB-like_PALP_sf"/>
</dbReference>
<dbReference type="NCBIfam" id="TIGR02035">
    <property type="entry name" value="D_Ser_am_lyase"/>
    <property type="match status" value="1"/>
</dbReference>
<dbReference type="NCBIfam" id="NF002823">
    <property type="entry name" value="PRK02991.1"/>
    <property type="match status" value="1"/>
</dbReference>
<dbReference type="PANTHER" id="PTHR48078:SF9">
    <property type="entry name" value="D-SERINE DEHYDRATASE"/>
    <property type="match status" value="1"/>
</dbReference>
<dbReference type="PANTHER" id="PTHR48078">
    <property type="entry name" value="THREONINE DEHYDRATASE, MITOCHONDRIAL-RELATED"/>
    <property type="match status" value="1"/>
</dbReference>
<dbReference type="Pfam" id="PF00291">
    <property type="entry name" value="PALP"/>
    <property type="match status" value="1"/>
</dbReference>
<dbReference type="SUPFAM" id="SSF53686">
    <property type="entry name" value="Tryptophan synthase beta subunit-like PLP-dependent enzymes"/>
    <property type="match status" value="1"/>
</dbReference>
<dbReference type="PROSITE" id="PS00165">
    <property type="entry name" value="DEHYDRATASE_SER_THR"/>
    <property type="match status" value="1"/>
</dbReference>
<proteinExistence type="inferred from homology"/>
<reference key="1">
    <citation type="submission" date="2007-09" db="EMBL/GenBank/DDBJ databases">
        <title>Complete sequence of chromosome of Serratia proteamaculans 568.</title>
        <authorList>
            <consortium name="US DOE Joint Genome Institute"/>
            <person name="Copeland A."/>
            <person name="Lucas S."/>
            <person name="Lapidus A."/>
            <person name="Barry K."/>
            <person name="Glavina del Rio T."/>
            <person name="Dalin E."/>
            <person name="Tice H."/>
            <person name="Pitluck S."/>
            <person name="Chain P."/>
            <person name="Malfatti S."/>
            <person name="Shin M."/>
            <person name="Vergez L."/>
            <person name="Schmutz J."/>
            <person name="Larimer F."/>
            <person name="Land M."/>
            <person name="Hauser L."/>
            <person name="Kyrpides N."/>
            <person name="Kim E."/>
            <person name="Taghavi S."/>
            <person name="Newman L."/>
            <person name="Vangronsveld J."/>
            <person name="van der Lelie D."/>
            <person name="Richardson P."/>
        </authorList>
    </citation>
    <scope>NUCLEOTIDE SEQUENCE [LARGE SCALE GENOMIC DNA]</scope>
    <source>
        <strain>568</strain>
    </source>
</reference>
<accession>A8GES6</accession>
<gene>
    <name evidence="1" type="primary">dsdA</name>
    <name type="ordered locus">Spro_2515</name>
</gene>
<sequence>MEKTQIQQLVKQFPLVQELIELNPVTWFNPRATTLQAGLPFVGLDAADVADAEQRLARFAPYLSAAFPETRAANGVIESEVVALPAMQTALDQRYGLSLAGRLLLKKDSHLPISGSIKARGGIYEVLAHAEKLALAAGLLQLTDDYAKLFSAEFREFFGGYRIAVGSTGNLGMSIGIISARLGFSVSVHMSADAREWKKQKLRDNGVNVVEYEQDYGVAVEQGRLQAASDPRCFFIDDENSQTLFLGYAVAGGRLRRQFAESGVQVDAQHPLFVYLPCGVGGGPGGVAFGLKLAFGDHVHCIFAEPTHSPCMLLGVHTGLHDGIAVQDLGIDNQTAADGLAVGRASGFVGRAMERLLSGFYTLSDREMFALLGLLDSHEHIQLEPSALAGMPGPWRVTADTEWLAAQGLNEQQMKNATHLVWATGGGMVPEAEMAKYLANARQSI</sequence>
<protein>
    <recommendedName>
        <fullName evidence="1">D-serine dehydratase</fullName>
        <ecNumber evidence="1">4.3.1.18</ecNumber>
    </recommendedName>
    <alternativeName>
        <fullName evidence="1">D-serine deaminase</fullName>
        <shortName evidence="1">DSD</shortName>
    </alternativeName>
</protein>